<sequence length="238" mass="27328">MESWQEDLLSAFLVVKNEDELFEVVKSTASKLGFDYCAYGMQSPLSIAEPKTIMLNNYPQAWQKRYIEQRYVKVDPTVQHCMVSLQPLVWSSQNAKTQEEKDFWEEARSYGLNVGWAQSSRDFIGTRGMLTLARSTDQLSEKEQKAQYTNMYWLTQTVHSSIAKIVNDVEFSQFNLYLTNREKEALRWTAEGKTSAEIAQIIGVTERTVNFHLCNSMQKLNVNNKISAAIRAVMLGLL</sequence>
<gene>
    <name evidence="2" type="primary">anoR</name>
    <name evidence="4" type="ORF">RR32_17455</name>
</gene>
<proteinExistence type="evidence at transcript level"/>
<comment type="function">
    <text>Positively regulates the expression of anoI. Required for biofilm formation and motility. Probably part of a quorum-sensing system with AnoI.</text>
</comment>
<comment type="induction">
    <text>Expression is decreased by virstatin.</text>
</comment>
<comment type="disruption phenotype">
    <text>Deletion mutant exhibits deficiency in biofilm formation and motility.</text>
</comment>
<comment type="similarity">
    <text evidence="3">Belongs to the autoinducer-regulated transcriptional regulatory protein family.</text>
</comment>
<dbReference type="EMBL" id="CP010368">
    <property type="protein sequence ID" value="AJB49804.1"/>
    <property type="molecule type" value="Genomic_DNA"/>
</dbReference>
<dbReference type="SMR" id="A0A0N8YGA2"/>
<dbReference type="STRING" id="106654.B7L44_20120"/>
<dbReference type="KEGG" id="ano:RR32_17455"/>
<dbReference type="PATRIC" id="fig|106654.21.peg.3482"/>
<dbReference type="eggNOG" id="COG2197">
    <property type="taxonomic scope" value="Bacteria"/>
</dbReference>
<dbReference type="GO" id="GO:0003677">
    <property type="term" value="F:DNA binding"/>
    <property type="evidence" value="ECO:0007669"/>
    <property type="project" value="UniProtKB-KW"/>
</dbReference>
<dbReference type="GO" id="GO:0009372">
    <property type="term" value="P:quorum sensing"/>
    <property type="evidence" value="ECO:0007669"/>
    <property type="project" value="UniProtKB-KW"/>
</dbReference>
<dbReference type="GO" id="GO:0006355">
    <property type="term" value="P:regulation of DNA-templated transcription"/>
    <property type="evidence" value="ECO:0007669"/>
    <property type="project" value="InterPro"/>
</dbReference>
<dbReference type="CDD" id="cd06170">
    <property type="entry name" value="LuxR_C_like"/>
    <property type="match status" value="1"/>
</dbReference>
<dbReference type="Gene3D" id="3.30.450.80">
    <property type="entry name" value="Transcription factor LuxR-like, autoinducer-binding domain"/>
    <property type="match status" value="1"/>
</dbReference>
<dbReference type="Gene3D" id="1.10.10.10">
    <property type="entry name" value="Winged helix-like DNA-binding domain superfamily/Winged helix DNA-binding domain"/>
    <property type="match status" value="1"/>
</dbReference>
<dbReference type="InterPro" id="IPR016032">
    <property type="entry name" value="Sig_transdc_resp-reg_C-effctor"/>
</dbReference>
<dbReference type="InterPro" id="IPR005143">
    <property type="entry name" value="TF_LuxR_autoind-bd_dom"/>
</dbReference>
<dbReference type="InterPro" id="IPR036693">
    <property type="entry name" value="TF_LuxR_autoind-bd_dom_sf"/>
</dbReference>
<dbReference type="InterPro" id="IPR000792">
    <property type="entry name" value="Tscrpt_reg_LuxR_C"/>
</dbReference>
<dbReference type="InterPro" id="IPR036388">
    <property type="entry name" value="WH-like_DNA-bd_sf"/>
</dbReference>
<dbReference type="PANTHER" id="PTHR44688">
    <property type="entry name" value="DNA-BINDING TRANSCRIPTIONAL ACTIVATOR DEVR_DOSR"/>
    <property type="match status" value="1"/>
</dbReference>
<dbReference type="PANTHER" id="PTHR44688:SF16">
    <property type="entry name" value="DNA-BINDING TRANSCRIPTIONAL ACTIVATOR DEVR_DOSR"/>
    <property type="match status" value="1"/>
</dbReference>
<dbReference type="Pfam" id="PF03472">
    <property type="entry name" value="Autoind_bind"/>
    <property type="match status" value="1"/>
</dbReference>
<dbReference type="Pfam" id="PF00196">
    <property type="entry name" value="GerE"/>
    <property type="match status" value="1"/>
</dbReference>
<dbReference type="PRINTS" id="PR00038">
    <property type="entry name" value="HTHLUXR"/>
</dbReference>
<dbReference type="SMART" id="SM00421">
    <property type="entry name" value="HTH_LUXR"/>
    <property type="match status" value="1"/>
</dbReference>
<dbReference type="SUPFAM" id="SSF46894">
    <property type="entry name" value="C-terminal effector domain of the bipartite response regulators"/>
    <property type="match status" value="1"/>
</dbReference>
<dbReference type="SUPFAM" id="SSF75516">
    <property type="entry name" value="Pheromone-binding domain of LuxR-like quorum-sensing transcription factors"/>
    <property type="match status" value="1"/>
</dbReference>
<dbReference type="PROSITE" id="PS00622">
    <property type="entry name" value="HTH_LUXR_1"/>
    <property type="match status" value="1"/>
</dbReference>
<dbReference type="PROSITE" id="PS50043">
    <property type="entry name" value="HTH_LUXR_2"/>
    <property type="match status" value="1"/>
</dbReference>
<reference key="1">
    <citation type="submission" date="2014-12" db="EMBL/GenBank/DDBJ databases">
        <authorList>
            <person name="McCorrison J."/>
            <person name="Sanka R."/>
            <person name="Adams M."/>
            <person name="Brinkac L."/>
            <person name="Sutton G."/>
            <person name="Bonomo R."/>
            <person name="Rojas L."/>
        </authorList>
    </citation>
    <scope>NUCLEOTIDE SEQUENCE [LARGE SCALE GENOMIC DNA]</scope>
    <source>
        <strain>6411</strain>
    </source>
</reference>
<reference key="2">
    <citation type="journal article" date="2015" name="J. Microbiol. Biotechnol.">
        <title>Role of LuxIR homologue AnoIR in Acinetobacter nosocomialis and the effect of virstatin on the expression of anoR gene.</title>
        <authorList>
            <person name="Oh M.H."/>
            <person name="Choi C.H."/>
        </authorList>
    </citation>
    <scope>FUNCTION</scope>
    <scope>INDUCTION</scope>
    <scope>DISRUPTION PHENOTYPE</scope>
    <source>
        <strain>ATCC 17903</strain>
    </source>
</reference>
<accession>A0A0N8YGA2</accession>
<accession>A0A0A7XVJ1</accession>
<protein>
    <recommendedName>
        <fullName evidence="3">Transcriptional activator protein AnoR</fullName>
    </recommendedName>
</protein>
<feature type="chain" id="PRO_0000438128" description="Transcriptional activator protein AnoR">
    <location>
        <begin position="1"/>
        <end position="238"/>
    </location>
</feature>
<feature type="domain" description="HTH luxR-type" evidence="1">
    <location>
        <begin position="170"/>
        <end position="236"/>
    </location>
</feature>
<feature type="DNA-binding region" description="H-T-H motif" evidence="1">
    <location>
        <begin position="195"/>
        <end position="214"/>
    </location>
</feature>
<name>ANOR_ACINO</name>
<evidence type="ECO:0000255" key="1">
    <source>
        <dbReference type="PROSITE-ProRule" id="PRU00411"/>
    </source>
</evidence>
<evidence type="ECO:0000303" key="2">
    <source>
    </source>
</evidence>
<evidence type="ECO:0000305" key="3"/>
<evidence type="ECO:0000312" key="4">
    <source>
        <dbReference type="EMBL" id="AJB49804.1"/>
    </source>
</evidence>
<keyword id="KW-0010">Activator</keyword>
<keyword id="KW-0238">DNA-binding</keyword>
<keyword id="KW-0673">Quorum sensing</keyword>
<keyword id="KW-0804">Transcription</keyword>
<keyword id="KW-0805">Transcription regulation</keyword>
<organism>
    <name type="scientific">Acinetobacter nosocomialis</name>
    <dbReference type="NCBI Taxonomy" id="106654"/>
    <lineage>
        <taxon>Bacteria</taxon>
        <taxon>Pseudomonadati</taxon>
        <taxon>Pseudomonadota</taxon>
        <taxon>Gammaproteobacteria</taxon>
        <taxon>Moraxellales</taxon>
        <taxon>Moraxellaceae</taxon>
        <taxon>Acinetobacter</taxon>
        <taxon>Acinetobacter calcoaceticus/baumannii complex</taxon>
    </lineage>
</organism>